<geneLocation type="plasmid">
    <name>sym pRL1JI</name>
</geneLocation>
<dbReference type="EC" id="7.6.2.-" evidence="1"/>
<dbReference type="EMBL" id="Y00548">
    <property type="protein sequence ID" value="CAA68618.1"/>
    <property type="molecule type" value="Genomic_DNA"/>
</dbReference>
<dbReference type="PIR" id="A24400">
    <property type="entry name" value="A24400"/>
</dbReference>
<dbReference type="SMR" id="P08720"/>
<dbReference type="GO" id="GO:0005886">
    <property type="term" value="C:plasma membrane"/>
    <property type="evidence" value="ECO:0007669"/>
    <property type="project" value="UniProtKB-SubCell"/>
</dbReference>
<dbReference type="GO" id="GO:0005524">
    <property type="term" value="F:ATP binding"/>
    <property type="evidence" value="ECO:0007669"/>
    <property type="project" value="UniProtKB-KW"/>
</dbReference>
<dbReference type="GO" id="GO:0016887">
    <property type="term" value="F:ATP hydrolysis activity"/>
    <property type="evidence" value="ECO:0007669"/>
    <property type="project" value="InterPro"/>
</dbReference>
<dbReference type="GO" id="GO:0022857">
    <property type="term" value="F:transmembrane transporter activity"/>
    <property type="evidence" value="ECO:0007669"/>
    <property type="project" value="InterPro"/>
</dbReference>
<dbReference type="CDD" id="cd03263">
    <property type="entry name" value="ABC_subfamily_A"/>
    <property type="match status" value="1"/>
</dbReference>
<dbReference type="FunFam" id="3.40.50.300:FF:000589">
    <property type="entry name" value="ABC transporter, ATP-binding subunit"/>
    <property type="match status" value="1"/>
</dbReference>
<dbReference type="Gene3D" id="3.40.50.300">
    <property type="entry name" value="P-loop containing nucleotide triphosphate hydrolases"/>
    <property type="match status" value="1"/>
</dbReference>
<dbReference type="InterPro" id="IPR003593">
    <property type="entry name" value="AAA+_ATPase"/>
</dbReference>
<dbReference type="InterPro" id="IPR003439">
    <property type="entry name" value="ABC_transporter-like_ATP-bd"/>
</dbReference>
<dbReference type="InterPro" id="IPR017871">
    <property type="entry name" value="ABC_transporter-like_CS"/>
</dbReference>
<dbReference type="InterPro" id="IPR050763">
    <property type="entry name" value="ABC_transporter_ATP-binding"/>
</dbReference>
<dbReference type="InterPro" id="IPR005978">
    <property type="entry name" value="ABC_transptNodI"/>
</dbReference>
<dbReference type="InterPro" id="IPR027417">
    <property type="entry name" value="P-loop_NTPase"/>
</dbReference>
<dbReference type="NCBIfam" id="TIGR01288">
    <property type="entry name" value="nodI"/>
    <property type="match status" value="1"/>
</dbReference>
<dbReference type="NCBIfam" id="NF010059">
    <property type="entry name" value="PRK13536.1"/>
    <property type="match status" value="1"/>
</dbReference>
<dbReference type="PANTHER" id="PTHR42711">
    <property type="entry name" value="ABC TRANSPORTER ATP-BINDING PROTEIN"/>
    <property type="match status" value="1"/>
</dbReference>
<dbReference type="PANTHER" id="PTHR42711:SF5">
    <property type="entry name" value="ABC TRANSPORTER ATP-BINDING PROTEIN NATA"/>
    <property type="match status" value="1"/>
</dbReference>
<dbReference type="Pfam" id="PF00005">
    <property type="entry name" value="ABC_tran"/>
    <property type="match status" value="1"/>
</dbReference>
<dbReference type="SMART" id="SM00382">
    <property type="entry name" value="AAA"/>
    <property type="match status" value="1"/>
</dbReference>
<dbReference type="SUPFAM" id="SSF52540">
    <property type="entry name" value="P-loop containing nucleoside triphosphate hydrolases"/>
    <property type="match status" value="1"/>
</dbReference>
<dbReference type="PROSITE" id="PS00211">
    <property type="entry name" value="ABC_TRANSPORTER_1"/>
    <property type="match status" value="1"/>
</dbReference>
<dbReference type="PROSITE" id="PS50893">
    <property type="entry name" value="ABC_TRANSPORTER_2"/>
    <property type="match status" value="1"/>
</dbReference>
<dbReference type="PROSITE" id="PS51240">
    <property type="entry name" value="NODI"/>
    <property type="match status" value="1"/>
</dbReference>
<sequence>MDSPSGSLSPVAIDLAGVSKSYGGKIVVNDLSFTIAAGECFGLLGPNGAGKSTITRMILGMTSPSVGKITVLGAQEPGQVRLARAKIGIVSQFDNLDLEFTVRENLLVYGRYFRMSTREIETVIPSLLEFARLESKANTRVADLSGGMKRRLTLAGALINDPQLLILDEPTTGLDPHARHLIWERLRSLLARGKTILLTTHIMEEAERLCDRLCVLEAGRKIAEGRPHALIEEQIGCPVIEIYGGDPQELSLLIRPNARRLEISGETLFCYTPDPEQVRAQLRAYSNLRLLERPPNLEDVFLRLTGREMEK</sequence>
<reference key="1">
    <citation type="journal article" date="1986" name="Gene">
        <title>The nodI gene product of Rhizobium leguminosarum is closely related to ATP-binding bacterial transport proteins; nucleotide sequence analysis of the nodI and nodJ genes.</title>
        <authorList>
            <person name="Evans I.J."/>
            <person name="Downie J.A."/>
        </authorList>
    </citation>
    <scope>NUCLEOTIDE SEQUENCE [GENOMIC DNA]</scope>
</reference>
<protein>
    <recommendedName>
        <fullName evidence="1">Nod factor export ATP-binding protein I</fullName>
        <ecNumber evidence="1">7.6.2.-</ecNumber>
    </recommendedName>
    <alternativeName>
        <fullName evidence="1">Nodulation ATP-binding protein I</fullName>
    </alternativeName>
</protein>
<comment type="function">
    <text evidence="1">Part of the ABC transporter complex NodIJ involved in the export of the nodulation factors (Nod factors), the bacterial signal molecules that induce symbiosis and subsequent nodulation induction. Nod factors are LCO (lipo-chitin oligosaccharide), a modified beta-1,4-linked N-acetylglucosamine oligosaccharide. This subunit is responsible for energy coupling to the transport system.</text>
</comment>
<comment type="subunit">
    <text evidence="1">The complex is composed of two ATP-binding proteins (NodI) and two transmembrane proteins (NodJ).</text>
</comment>
<comment type="subcellular location">
    <subcellularLocation>
        <location evidence="1">Cell inner membrane</location>
        <topology evidence="1">Peripheral membrane protein</topology>
    </subcellularLocation>
</comment>
<comment type="similarity">
    <text evidence="1">Belongs to the ABC transporter superfamily. Lipooligosaccharide exporter (TC 3.A.1.102) family.</text>
</comment>
<proteinExistence type="inferred from homology"/>
<accession>P08720</accession>
<name>NODI_RHILV</name>
<keyword id="KW-0067">ATP-binding</keyword>
<keyword id="KW-0997">Cell inner membrane</keyword>
<keyword id="KW-1003">Cell membrane</keyword>
<keyword id="KW-0472">Membrane</keyword>
<keyword id="KW-0536">Nodulation</keyword>
<keyword id="KW-0547">Nucleotide-binding</keyword>
<keyword id="KW-0614">Plasmid</keyword>
<keyword id="KW-1278">Translocase</keyword>
<keyword id="KW-0813">Transport</keyword>
<organism>
    <name type="scientific">Rhizobium leguminosarum bv. viciae</name>
    <dbReference type="NCBI Taxonomy" id="387"/>
    <lineage>
        <taxon>Bacteria</taxon>
        <taxon>Pseudomonadati</taxon>
        <taxon>Pseudomonadota</taxon>
        <taxon>Alphaproteobacteria</taxon>
        <taxon>Hyphomicrobiales</taxon>
        <taxon>Rhizobiaceae</taxon>
        <taxon>Rhizobium/Agrobacterium group</taxon>
        <taxon>Rhizobium</taxon>
    </lineage>
</organism>
<gene>
    <name evidence="1" type="primary">nodI</name>
</gene>
<feature type="chain" id="PRO_0000092638" description="Nod factor export ATP-binding protein I">
    <location>
        <begin position="1"/>
        <end position="311"/>
    </location>
</feature>
<feature type="domain" description="ABC transporter" evidence="1">
    <location>
        <begin position="13"/>
        <end position="243"/>
    </location>
</feature>
<feature type="binding site" evidence="1">
    <location>
        <begin position="45"/>
        <end position="52"/>
    </location>
    <ligand>
        <name>ATP</name>
        <dbReference type="ChEBI" id="CHEBI:30616"/>
    </ligand>
</feature>
<evidence type="ECO:0000255" key="1">
    <source>
        <dbReference type="HAMAP-Rule" id="MF_01704"/>
    </source>
</evidence>